<gene>
    <name evidence="1" type="primary">apgM</name>
    <name type="ordered locus">CTN_0964</name>
</gene>
<accession>B9K857</accession>
<protein>
    <recommendedName>
        <fullName evidence="1">Probable 2,3-bisphosphoglycerate-independent phosphoglycerate mutase</fullName>
        <shortName evidence="1">BPG-independent PGAM</shortName>
        <shortName evidence="1">Phosphoglyceromutase</shortName>
        <shortName evidence="1">aPGAM</shortName>
        <ecNumber evidence="1">5.4.2.12</ecNumber>
    </recommendedName>
</protein>
<sequence>MLDKQKFVSKLVTTNDTKIVLLVMDGLGDIPVNGKTPLQAASTPNLDSLAKESDLGQTVPVLPGITPGSGPGHLSLFGYDPIKYQIGRGILEALGIGVEVGEKDVVARANFATWDGNVVLDRRAGRPATEESAKVVQLLSEKIKKIEDVEITFYPGKEHRFVVKFTGEGLGDRVTDADPQKEGHPMVWAEGLDEPSKKTARIANELIRKIAEVLKDNPKINFALIRGFSKYPDLPKFPEIYKLRAGAIATYPMYRGLAKLVGMEIIETGQTVEDEINTLKEKWNDFDFFYVHVKKTDSYGEDGKFDEKVKVIEEVDRVIPEILALKPDVLVITGDHSTPVPLKAHSWHPVPLLIWSRYTRRGLSQAFNEFECARGTLGTIHASDVMTLALAYAGRLEKFGA</sequence>
<comment type="function">
    <text evidence="1">Catalyzes the interconversion of 2-phosphoglycerate and 3-phosphoglycerate.</text>
</comment>
<comment type="catalytic activity">
    <reaction evidence="1">
        <text>(2R)-2-phosphoglycerate = (2R)-3-phosphoglycerate</text>
        <dbReference type="Rhea" id="RHEA:15901"/>
        <dbReference type="ChEBI" id="CHEBI:58272"/>
        <dbReference type="ChEBI" id="CHEBI:58289"/>
        <dbReference type="EC" id="5.4.2.12"/>
    </reaction>
</comment>
<comment type="pathway">
    <text evidence="1">Carbohydrate degradation; glycolysis; pyruvate from D-glyceraldehyde 3-phosphate: step 3/5.</text>
</comment>
<comment type="similarity">
    <text evidence="1">Belongs to the BPG-independent phosphoglycerate mutase family. A-PGAM subfamily.</text>
</comment>
<organism>
    <name type="scientific">Thermotoga neapolitana (strain ATCC 49049 / DSM 4359 / NBRC 107923 / NS-E)</name>
    <dbReference type="NCBI Taxonomy" id="309803"/>
    <lineage>
        <taxon>Bacteria</taxon>
        <taxon>Thermotogati</taxon>
        <taxon>Thermotogota</taxon>
        <taxon>Thermotogae</taxon>
        <taxon>Thermotogales</taxon>
        <taxon>Thermotogaceae</taxon>
        <taxon>Thermotoga</taxon>
    </lineage>
</organism>
<proteinExistence type="inferred from homology"/>
<evidence type="ECO:0000255" key="1">
    <source>
        <dbReference type="HAMAP-Rule" id="MF_01402"/>
    </source>
</evidence>
<reference key="1">
    <citation type="submission" date="2007-11" db="EMBL/GenBank/DDBJ databases">
        <title>The genome sequence of the hyperthermophilic bacterium Thermotoga neapolitana.</title>
        <authorList>
            <person name="Lim S.K."/>
            <person name="Kim J.S."/>
            <person name="Cha S.H."/>
            <person name="Park B.C."/>
            <person name="Lee D.S."/>
            <person name="Tae H.S."/>
            <person name="Kim S.-J."/>
            <person name="Kim J.J."/>
            <person name="Park K.J."/>
            <person name="Lee S.Y."/>
        </authorList>
    </citation>
    <scope>NUCLEOTIDE SEQUENCE [LARGE SCALE GENOMIC DNA]</scope>
    <source>
        <strain>ATCC 49049 / DSM 4359 / NBRC 107923 / NS-E</strain>
    </source>
</reference>
<keyword id="KW-0324">Glycolysis</keyword>
<keyword id="KW-0413">Isomerase</keyword>
<dbReference type="EC" id="5.4.2.12" evidence="1"/>
<dbReference type="EMBL" id="CP000916">
    <property type="protein sequence ID" value="ACM23140.1"/>
    <property type="molecule type" value="Genomic_DNA"/>
</dbReference>
<dbReference type="RefSeq" id="WP_015919457.1">
    <property type="nucleotide sequence ID" value="NC_011978.1"/>
</dbReference>
<dbReference type="SMR" id="B9K857"/>
<dbReference type="STRING" id="309803.CTN_0964"/>
<dbReference type="KEGG" id="tna:CTN_0964"/>
<dbReference type="eggNOG" id="COG3635">
    <property type="taxonomic scope" value="Bacteria"/>
</dbReference>
<dbReference type="HOGENOM" id="CLU_034906_2_0_0"/>
<dbReference type="UniPathway" id="UPA00109">
    <property type="reaction ID" value="UER00186"/>
</dbReference>
<dbReference type="Proteomes" id="UP000000445">
    <property type="component" value="Chromosome"/>
</dbReference>
<dbReference type="GO" id="GO:0046872">
    <property type="term" value="F:metal ion binding"/>
    <property type="evidence" value="ECO:0007669"/>
    <property type="project" value="InterPro"/>
</dbReference>
<dbReference type="GO" id="GO:0004619">
    <property type="term" value="F:phosphoglycerate mutase activity"/>
    <property type="evidence" value="ECO:0007669"/>
    <property type="project" value="UniProtKB-EC"/>
</dbReference>
<dbReference type="GO" id="GO:0006096">
    <property type="term" value="P:glycolytic process"/>
    <property type="evidence" value="ECO:0007669"/>
    <property type="project" value="UniProtKB-UniRule"/>
</dbReference>
<dbReference type="CDD" id="cd16011">
    <property type="entry name" value="iPGM_like"/>
    <property type="match status" value="1"/>
</dbReference>
<dbReference type="Gene3D" id="3.40.720.10">
    <property type="entry name" value="Alkaline Phosphatase, subunit A"/>
    <property type="match status" value="2"/>
</dbReference>
<dbReference type="HAMAP" id="MF_01402_B">
    <property type="entry name" value="ApgM_B"/>
    <property type="match status" value="1"/>
</dbReference>
<dbReference type="InterPro" id="IPR017850">
    <property type="entry name" value="Alkaline_phosphatase_core_sf"/>
</dbReference>
<dbReference type="InterPro" id="IPR023665">
    <property type="entry name" value="ApgAM_prokaryotes"/>
</dbReference>
<dbReference type="InterPro" id="IPR006124">
    <property type="entry name" value="Metalloenzyme"/>
</dbReference>
<dbReference type="InterPro" id="IPR004456">
    <property type="entry name" value="Pglycerate_mutase_ApgM"/>
</dbReference>
<dbReference type="NCBIfam" id="TIGR00306">
    <property type="entry name" value="apgM"/>
    <property type="match status" value="1"/>
</dbReference>
<dbReference type="NCBIfam" id="NF003160">
    <property type="entry name" value="PRK04135.1"/>
    <property type="match status" value="1"/>
</dbReference>
<dbReference type="PANTHER" id="PTHR31209">
    <property type="entry name" value="COFACTOR-INDEPENDENT PHOSPHOGLYCERATE MUTASE"/>
    <property type="match status" value="1"/>
</dbReference>
<dbReference type="PANTHER" id="PTHR31209:SF0">
    <property type="entry name" value="METALLOENZYME DOMAIN-CONTAINING PROTEIN"/>
    <property type="match status" value="1"/>
</dbReference>
<dbReference type="Pfam" id="PF01676">
    <property type="entry name" value="Metalloenzyme"/>
    <property type="match status" value="1"/>
</dbReference>
<dbReference type="Pfam" id="PF10143">
    <property type="entry name" value="PhosphMutase"/>
    <property type="match status" value="1"/>
</dbReference>
<dbReference type="PIRSF" id="PIRSF006392">
    <property type="entry name" value="IPGAM_arch"/>
    <property type="match status" value="1"/>
</dbReference>
<dbReference type="SUPFAM" id="SSF53649">
    <property type="entry name" value="Alkaline phosphatase-like"/>
    <property type="match status" value="1"/>
</dbReference>
<feature type="chain" id="PRO_1000184575" description="Probable 2,3-bisphosphoglycerate-independent phosphoglycerate mutase">
    <location>
        <begin position="1"/>
        <end position="401"/>
    </location>
</feature>
<name>APGM_THENN</name>